<sequence>MSKTHLTEQKFSDFALHPQVIEALESKGFHYCTPIQALALPLTLSGRDVAGQAQTGTGKTLAFLASTFHYLLSHPANAERQTNQPRALIMAPTRELAVQIHSDAEALSHLTGLKLGLAYGGDGYDKQLKVLENGVDILVGTTGRLIDYAKQNHINLGAIQVVVLDEADRMYDLGFIKDIRWLFRRMPATSQRLNMLFSATLSYRVRELAFEQMNNAEYVEVEPEQKTGHRITEELFYPSNEEKMRLLQTLLEEEWPDRCIIFANTKHRCEDVWGHLAADGHRVGLLTGDVAQKKRLRILEEFTQGSIDILVATDVAARGLHIPSVTHVFNYDLPDDCEDYVHRIGRTGRAGQSGFSISLACEEYALNLPAIETYIGHGIPLSKYNSDALMNDLPAPKRLTRPPRSNNGPRRHNSAPRRSGAPRNNRKRAD</sequence>
<feature type="initiator methionine" description="Removed" evidence="1">
    <location>
        <position position="1"/>
    </location>
</feature>
<feature type="chain" id="PRO_0000200772" description="ATP-dependent RNA helicase RhlB">
    <location>
        <begin position="2"/>
        <end position="430"/>
    </location>
</feature>
<feature type="domain" description="Helicase ATP-binding" evidence="2">
    <location>
        <begin position="40"/>
        <end position="219"/>
    </location>
</feature>
<feature type="domain" description="Helicase C-terminal" evidence="2">
    <location>
        <begin position="245"/>
        <end position="390"/>
    </location>
</feature>
<feature type="region of interest" description="Disordered" evidence="3">
    <location>
        <begin position="392"/>
        <end position="430"/>
    </location>
</feature>
<feature type="short sequence motif" description="Q motif">
    <location>
        <begin position="9"/>
        <end position="37"/>
    </location>
</feature>
<feature type="short sequence motif" description="DEAD box">
    <location>
        <begin position="165"/>
        <end position="168"/>
    </location>
</feature>
<feature type="binding site" evidence="2">
    <location>
        <begin position="53"/>
        <end position="60"/>
    </location>
    <ligand>
        <name>ATP</name>
        <dbReference type="ChEBI" id="CHEBI:30616"/>
    </ligand>
</feature>
<accession>Q6CZD9</accession>
<organism>
    <name type="scientific">Pectobacterium atrosepticum (strain SCRI 1043 / ATCC BAA-672)</name>
    <name type="common">Erwinia carotovora subsp. atroseptica</name>
    <dbReference type="NCBI Taxonomy" id="218491"/>
    <lineage>
        <taxon>Bacteria</taxon>
        <taxon>Pseudomonadati</taxon>
        <taxon>Pseudomonadota</taxon>
        <taxon>Gammaproteobacteria</taxon>
        <taxon>Enterobacterales</taxon>
        <taxon>Pectobacteriaceae</taxon>
        <taxon>Pectobacterium</taxon>
    </lineage>
</organism>
<keyword id="KW-0067">ATP-binding</keyword>
<keyword id="KW-0963">Cytoplasm</keyword>
<keyword id="KW-0347">Helicase</keyword>
<keyword id="KW-0378">Hydrolase</keyword>
<keyword id="KW-0547">Nucleotide-binding</keyword>
<keyword id="KW-1185">Reference proteome</keyword>
<keyword id="KW-0694">RNA-binding</keyword>
<dbReference type="EC" id="3.6.4.13" evidence="2"/>
<dbReference type="EMBL" id="BX950851">
    <property type="protein sequence ID" value="CAG77110.1"/>
    <property type="molecule type" value="Genomic_DNA"/>
</dbReference>
<dbReference type="RefSeq" id="WP_011095684.1">
    <property type="nucleotide sequence ID" value="NC_004547.2"/>
</dbReference>
<dbReference type="SMR" id="Q6CZD9"/>
<dbReference type="STRING" id="218491.ECA4213"/>
<dbReference type="GeneID" id="57210879"/>
<dbReference type="KEGG" id="eca:ECA4213"/>
<dbReference type="PATRIC" id="fig|218491.5.peg.4289"/>
<dbReference type="eggNOG" id="COG0513">
    <property type="taxonomic scope" value="Bacteria"/>
</dbReference>
<dbReference type="HOGENOM" id="CLU_003041_1_3_6"/>
<dbReference type="OrthoDB" id="9805696at2"/>
<dbReference type="Proteomes" id="UP000007966">
    <property type="component" value="Chromosome"/>
</dbReference>
<dbReference type="GO" id="GO:0005829">
    <property type="term" value="C:cytosol"/>
    <property type="evidence" value="ECO:0007669"/>
    <property type="project" value="TreeGrafter"/>
</dbReference>
<dbReference type="GO" id="GO:0005524">
    <property type="term" value="F:ATP binding"/>
    <property type="evidence" value="ECO:0007669"/>
    <property type="project" value="UniProtKB-UniRule"/>
</dbReference>
<dbReference type="GO" id="GO:0016887">
    <property type="term" value="F:ATP hydrolysis activity"/>
    <property type="evidence" value="ECO:0007669"/>
    <property type="project" value="RHEA"/>
</dbReference>
<dbReference type="GO" id="GO:0003723">
    <property type="term" value="F:RNA binding"/>
    <property type="evidence" value="ECO:0007669"/>
    <property type="project" value="UniProtKB-UniRule"/>
</dbReference>
<dbReference type="GO" id="GO:0003724">
    <property type="term" value="F:RNA helicase activity"/>
    <property type="evidence" value="ECO:0007669"/>
    <property type="project" value="UniProtKB-UniRule"/>
</dbReference>
<dbReference type="GO" id="GO:0006401">
    <property type="term" value="P:RNA catabolic process"/>
    <property type="evidence" value="ECO:0007669"/>
    <property type="project" value="UniProtKB-UniRule"/>
</dbReference>
<dbReference type="CDD" id="cd00268">
    <property type="entry name" value="DEADc"/>
    <property type="match status" value="1"/>
</dbReference>
<dbReference type="CDD" id="cd18787">
    <property type="entry name" value="SF2_C_DEAD"/>
    <property type="match status" value="1"/>
</dbReference>
<dbReference type="FunFam" id="3.40.50.300:FF:000312">
    <property type="entry name" value="ATP-dependent RNA helicase RhlB"/>
    <property type="match status" value="1"/>
</dbReference>
<dbReference type="Gene3D" id="3.40.50.300">
    <property type="entry name" value="P-loop containing nucleotide triphosphate hydrolases"/>
    <property type="match status" value="2"/>
</dbReference>
<dbReference type="HAMAP" id="MF_00661">
    <property type="entry name" value="DEAD_helicase_RhlB"/>
    <property type="match status" value="1"/>
</dbReference>
<dbReference type="InterPro" id="IPR011545">
    <property type="entry name" value="DEAD/DEAH_box_helicase_dom"/>
</dbReference>
<dbReference type="InterPro" id="IPR050079">
    <property type="entry name" value="DEAD_box_RNA_helicase"/>
</dbReference>
<dbReference type="InterPro" id="IPR014001">
    <property type="entry name" value="Helicase_ATP-bd"/>
</dbReference>
<dbReference type="InterPro" id="IPR001650">
    <property type="entry name" value="Helicase_C-like"/>
</dbReference>
<dbReference type="InterPro" id="IPR027417">
    <property type="entry name" value="P-loop_NTPase"/>
</dbReference>
<dbReference type="InterPro" id="IPR000629">
    <property type="entry name" value="RNA-helicase_DEAD-box_CS"/>
</dbReference>
<dbReference type="InterPro" id="IPR023554">
    <property type="entry name" value="RNA_helicase_ATP-dep_RhlB"/>
</dbReference>
<dbReference type="InterPro" id="IPR014014">
    <property type="entry name" value="RNA_helicase_DEAD_Q_motif"/>
</dbReference>
<dbReference type="NCBIfam" id="NF003419">
    <property type="entry name" value="PRK04837.1"/>
    <property type="match status" value="1"/>
</dbReference>
<dbReference type="PANTHER" id="PTHR47959:SF10">
    <property type="entry name" value="ATP-DEPENDENT RNA HELICASE RHLB"/>
    <property type="match status" value="1"/>
</dbReference>
<dbReference type="PANTHER" id="PTHR47959">
    <property type="entry name" value="ATP-DEPENDENT RNA HELICASE RHLE-RELATED"/>
    <property type="match status" value="1"/>
</dbReference>
<dbReference type="Pfam" id="PF00270">
    <property type="entry name" value="DEAD"/>
    <property type="match status" value="1"/>
</dbReference>
<dbReference type="Pfam" id="PF00271">
    <property type="entry name" value="Helicase_C"/>
    <property type="match status" value="1"/>
</dbReference>
<dbReference type="SMART" id="SM00487">
    <property type="entry name" value="DEXDc"/>
    <property type="match status" value="1"/>
</dbReference>
<dbReference type="SMART" id="SM00490">
    <property type="entry name" value="HELICc"/>
    <property type="match status" value="1"/>
</dbReference>
<dbReference type="SUPFAM" id="SSF52540">
    <property type="entry name" value="P-loop containing nucleoside triphosphate hydrolases"/>
    <property type="match status" value="1"/>
</dbReference>
<dbReference type="PROSITE" id="PS00039">
    <property type="entry name" value="DEAD_ATP_HELICASE"/>
    <property type="match status" value="1"/>
</dbReference>
<dbReference type="PROSITE" id="PS51192">
    <property type="entry name" value="HELICASE_ATP_BIND_1"/>
    <property type="match status" value="1"/>
</dbReference>
<dbReference type="PROSITE" id="PS51194">
    <property type="entry name" value="HELICASE_CTER"/>
    <property type="match status" value="1"/>
</dbReference>
<dbReference type="PROSITE" id="PS51195">
    <property type="entry name" value="Q_MOTIF"/>
    <property type="match status" value="1"/>
</dbReference>
<protein>
    <recommendedName>
        <fullName evidence="2">ATP-dependent RNA helicase RhlB</fullName>
        <ecNumber evidence="2">3.6.4.13</ecNumber>
    </recommendedName>
</protein>
<comment type="function">
    <text evidence="2">DEAD-box RNA helicase involved in RNA degradation. Has RNA-dependent ATPase activity and unwinds double-stranded RNA.</text>
</comment>
<comment type="catalytic activity">
    <reaction evidence="2">
        <text>ATP + H2O = ADP + phosphate + H(+)</text>
        <dbReference type="Rhea" id="RHEA:13065"/>
        <dbReference type="ChEBI" id="CHEBI:15377"/>
        <dbReference type="ChEBI" id="CHEBI:15378"/>
        <dbReference type="ChEBI" id="CHEBI:30616"/>
        <dbReference type="ChEBI" id="CHEBI:43474"/>
        <dbReference type="ChEBI" id="CHEBI:456216"/>
        <dbReference type="EC" id="3.6.4.13"/>
    </reaction>
</comment>
<comment type="subunit">
    <text evidence="2">Component of the RNA degradosome, which is a multiprotein complex involved in RNA processing and mRNA degradation.</text>
</comment>
<comment type="subcellular location">
    <subcellularLocation>
        <location evidence="2">Cytoplasm</location>
    </subcellularLocation>
</comment>
<comment type="similarity">
    <text evidence="2">Belongs to the DEAD box helicase family. RhlB subfamily.</text>
</comment>
<reference key="1">
    <citation type="journal article" date="2004" name="Proc. Natl. Acad. Sci. U.S.A.">
        <title>Genome sequence of the enterobacterial phytopathogen Erwinia carotovora subsp. atroseptica and characterization of virulence factors.</title>
        <authorList>
            <person name="Bell K.S."/>
            <person name="Sebaihia M."/>
            <person name="Pritchard L."/>
            <person name="Holden M.T.G."/>
            <person name="Hyman L.J."/>
            <person name="Holeva M.C."/>
            <person name="Thomson N.R."/>
            <person name="Bentley S.D."/>
            <person name="Churcher L.J.C."/>
            <person name="Mungall K."/>
            <person name="Atkin R."/>
            <person name="Bason N."/>
            <person name="Brooks K."/>
            <person name="Chillingworth T."/>
            <person name="Clark K."/>
            <person name="Doggett J."/>
            <person name="Fraser A."/>
            <person name="Hance Z."/>
            <person name="Hauser H."/>
            <person name="Jagels K."/>
            <person name="Moule S."/>
            <person name="Norbertczak H."/>
            <person name="Ormond D."/>
            <person name="Price C."/>
            <person name="Quail M.A."/>
            <person name="Sanders M."/>
            <person name="Walker D."/>
            <person name="Whitehead S."/>
            <person name="Salmond G.P.C."/>
            <person name="Birch P.R.J."/>
            <person name="Parkhill J."/>
            <person name="Toth I.K."/>
        </authorList>
    </citation>
    <scope>NUCLEOTIDE SEQUENCE [LARGE SCALE GENOMIC DNA]</scope>
    <source>
        <strain>SCRI 1043 / ATCC BAA-672</strain>
    </source>
</reference>
<name>RHLB_PECAS</name>
<evidence type="ECO:0000250" key="1"/>
<evidence type="ECO:0000255" key="2">
    <source>
        <dbReference type="HAMAP-Rule" id="MF_00661"/>
    </source>
</evidence>
<evidence type="ECO:0000256" key="3">
    <source>
        <dbReference type="SAM" id="MobiDB-lite"/>
    </source>
</evidence>
<gene>
    <name evidence="2" type="primary">rhlB</name>
    <name type="ordered locus">ECA4213</name>
</gene>
<proteinExistence type="inferred from homology"/>